<gene>
    <name evidence="1" type="primary">hldE</name>
    <name type="ordered locus">JJD26997_0578</name>
</gene>
<dbReference type="EC" id="2.7.1.167" evidence="1"/>
<dbReference type="EC" id="2.7.7.70" evidence="1"/>
<dbReference type="EMBL" id="CP000768">
    <property type="protein sequence ID" value="ABS44615.1"/>
    <property type="molecule type" value="Genomic_DNA"/>
</dbReference>
<dbReference type="SMR" id="A7H2L7"/>
<dbReference type="KEGG" id="cjd:JJD26997_0578"/>
<dbReference type="HOGENOM" id="CLU_021150_2_1_7"/>
<dbReference type="UniPathway" id="UPA00356">
    <property type="reaction ID" value="UER00437"/>
</dbReference>
<dbReference type="UniPathway" id="UPA00356">
    <property type="reaction ID" value="UER00439"/>
</dbReference>
<dbReference type="Proteomes" id="UP000002302">
    <property type="component" value="Chromosome"/>
</dbReference>
<dbReference type="GO" id="GO:0005829">
    <property type="term" value="C:cytosol"/>
    <property type="evidence" value="ECO:0007669"/>
    <property type="project" value="TreeGrafter"/>
</dbReference>
<dbReference type="GO" id="GO:0005524">
    <property type="term" value="F:ATP binding"/>
    <property type="evidence" value="ECO:0007669"/>
    <property type="project" value="UniProtKB-UniRule"/>
</dbReference>
<dbReference type="GO" id="GO:0033785">
    <property type="term" value="F:heptose 7-phosphate kinase activity"/>
    <property type="evidence" value="ECO:0007669"/>
    <property type="project" value="UniProtKB-UniRule"/>
</dbReference>
<dbReference type="GO" id="GO:0033786">
    <property type="term" value="F:heptose-1-phosphate adenylyltransferase activity"/>
    <property type="evidence" value="ECO:0007669"/>
    <property type="project" value="UniProtKB-UniRule"/>
</dbReference>
<dbReference type="GO" id="GO:0016773">
    <property type="term" value="F:phosphotransferase activity, alcohol group as acceptor"/>
    <property type="evidence" value="ECO:0007669"/>
    <property type="project" value="InterPro"/>
</dbReference>
<dbReference type="GO" id="GO:0097171">
    <property type="term" value="P:ADP-L-glycero-beta-D-manno-heptose biosynthetic process"/>
    <property type="evidence" value="ECO:0007669"/>
    <property type="project" value="UniProtKB-UniPathway"/>
</dbReference>
<dbReference type="CDD" id="cd01172">
    <property type="entry name" value="RfaE_like"/>
    <property type="match status" value="1"/>
</dbReference>
<dbReference type="FunFam" id="3.40.50.620:FF:000282">
    <property type="entry name" value="Bifunctional protein HldE"/>
    <property type="match status" value="1"/>
</dbReference>
<dbReference type="Gene3D" id="3.40.1190.20">
    <property type="match status" value="1"/>
</dbReference>
<dbReference type="Gene3D" id="3.40.50.620">
    <property type="entry name" value="HUPs"/>
    <property type="match status" value="1"/>
</dbReference>
<dbReference type="HAMAP" id="MF_01603">
    <property type="entry name" value="HldE"/>
    <property type="match status" value="1"/>
</dbReference>
<dbReference type="InterPro" id="IPR023030">
    <property type="entry name" value="Bifunc_HldE"/>
</dbReference>
<dbReference type="InterPro" id="IPR004821">
    <property type="entry name" value="Cyt_trans-like"/>
</dbReference>
<dbReference type="InterPro" id="IPR011611">
    <property type="entry name" value="PfkB_dom"/>
</dbReference>
<dbReference type="InterPro" id="IPR011913">
    <property type="entry name" value="RfaE_dom_I"/>
</dbReference>
<dbReference type="InterPro" id="IPR011914">
    <property type="entry name" value="RfaE_dom_II"/>
</dbReference>
<dbReference type="InterPro" id="IPR029056">
    <property type="entry name" value="Ribokinase-like"/>
</dbReference>
<dbReference type="InterPro" id="IPR014729">
    <property type="entry name" value="Rossmann-like_a/b/a_fold"/>
</dbReference>
<dbReference type="NCBIfam" id="TIGR00125">
    <property type="entry name" value="cyt_tran_rel"/>
    <property type="match status" value="1"/>
</dbReference>
<dbReference type="NCBIfam" id="TIGR02198">
    <property type="entry name" value="rfaE_dom_I"/>
    <property type="match status" value="1"/>
</dbReference>
<dbReference type="NCBIfam" id="TIGR02199">
    <property type="entry name" value="rfaE_dom_II"/>
    <property type="match status" value="1"/>
</dbReference>
<dbReference type="PANTHER" id="PTHR46969">
    <property type="entry name" value="BIFUNCTIONAL PROTEIN HLDE"/>
    <property type="match status" value="1"/>
</dbReference>
<dbReference type="PANTHER" id="PTHR46969:SF1">
    <property type="entry name" value="BIFUNCTIONAL PROTEIN HLDE"/>
    <property type="match status" value="1"/>
</dbReference>
<dbReference type="Pfam" id="PF01467">
    <property type="entry name" value="CTP_transf_like"/>
    <property type="match status" value="1"/>
</dbReference>
<dbReference type="Pfam" id="PF00294">
    <property type="entry name" value="PfkB"/>
    <property type="match status" value="1"/>
</dbReference>
<dbReference type="SUPFAM" id="SSF52374">
    <property type="entry name" value="Nucleotidylyl transferase"/>
    <property type="match status" value="1"/>
</dbReference>
<dbReference type="SUPFAM" id="SSF53613">
    <property type="entry name" value="Ribokinase-like"/>
    <property type="match status" value="1"/>
</dbReference>
<evidence type="ECO:0000255" key="1">
    <source>
        <dbReference type="HAMAP-Rule" id="MF_01603"/>
    </source>
</evidence>
<proteinExistence type="inferred from homology"/>
<protein>
    <recommendedName>
        <fullName evidence="1">Bifunctional protein HldE</fullName>
    </recommendedName>
    <domain>
        <recommendedName>
            <fullName evidence="1">D-beta-D-heptose 7-phosphate kinase</fullName>
            <ecNumber evidence="1">2.7.1.167</ecNumber>
        </recommendedName>
        <alternativeName>
            <fullName evidence="1">D-beta-D-heptose 7-phosphotransferase</fullName>
        </alternativeName>
        <alternativeName>
            <fullName evidence="1">D-glycero-beta-D-manno-heptose-7-phosphate kinase</fullName>
        </alternativeName>
    </domain>
    <domain>
        <recommendedName>
            <fullName evidence="1">D-beta-D-heptose 1-phosphate adenylyltransferase</fullName>
            <ecNumber evidence="1">2.7.7.70</ecNumber>
        </recommendedName>
        <alternativeName>
            <fullName evidence="1">D-glycero-beta-D-manno-heptose 1-phosphate adenylyltransferase</fullName>
        </alternativeName>
    </domain>
</protein>
<comment type="function">
    <text evidence="1">Catalyzes the phosphorylation of D-glycero-D-manno-heptose 7-phosphate at the C-1 position to selectively form D-glycero-beta-D-manno-heptose-1,7-bisphosphate.</text>
</comment>
<comment type="function">
    <text evidence="1">Catalyzes the ADP transfer from ATP to D-glycero-beta-D-manno-heptose 1-phosphate, yielding ADP-D-glycero-beta-D-manno-heptose.</text>
</comment>
<comment type="catalytic activity">
    <reaction evidence="1">
        <text>D-glycero-beta-D-manno-heptose 7-phosphate + ATP = D-glycero-beta-D-manno-heptose 1,7-bisphosphate + ADP + H(+)</text>
        <dbReference type="Rhea" id="RHEA:27473"/>
        <dbReference type="ChEBI" id="CHEBI:15378"/>
        <dbReference type="ChEBI" id="CHEBI:30616"/>
        <dbReference type="ChEBI" id="CHEBI:60204"/>
        <dbReference type="ChEBI" id="CHEBI:60208"/>
        <dbReference type="ChEBI" id="CHEBI:456216"/>
        <dbReference type="EC" id="2.7.1.167"/>
    </reaction>
</comment>
<comment type="catalytic activity">
    <reaction evidence="1">
        <text>D-glycero-beta-D-manno-heptose 1-phosphate + ATP + H(+) = ADP-D-glycero-beta-D-manno-heptose + diphosphate</text>
        <dbReference type="Rhea" id="RHEA:27465"/>
        <dbReference type="ChEBI" id="CHEBI:15378"/>
        <dbReference type="ChEBI" id="CHEBI:30616"/>
        <dbReference type="ChEBI" id="CHEBI:33019"/>
        <dbReference type="ChEBI" id="CHEBI:59967"/>
        <dbReference type="ChEBI" id="CHEBI:61593"/>
        <dbReference type="EC" id="2.7.7.70"/>
    </reaction>
</comment>
<comment type="pathway">
    <text evidence="1">Nucleotide-sugar biosynthesis; ADP-L-glycero-beta-D-manno-heptose biosynthesis; ADP-L-glycero-beta-D-manno-heptose from D-glycero-beta-D-manno-heptose 7-phosphate: step 1/4.</text>
</comment>
<comment type="pathway">
    <text evidence="1">Nucleotide-sugar biosynthesis; ADP-L-glycero-beta-D-manno-heptose biosynthesis; ADP-L-glycero-beta-D-manno-heptose from D-glycero-beta-D-manno-heptose 7-phosphate: step 3/4.</text>
</comment>
<comment type="subunit">
    <text evidence="1">Homodimer.</text>
</comment>
<comment type="similarity">
    <text evidence="1">In the N-terminal section; belongs to the carbohydrate kinase PfkB family.</text>
</comment>
<comment type="similarity">
    <text evidence="1">In the C-terminal section; belongs to the cytidylyltransferase family.</text>
</comment>
<sequence>MLEFLSQQKPKILIIGDFMVDNYTWCDCSRISPEAPVLVAKTLKEDKRLGGAANVYANLKSLGADVFALGVVGDDESGKFLQENLKGEFLIQKGRKTPFKNRIMAHNQQVLRLDEEDTSEILLENELIALFDEKIKDFKAVVLSDYAKGILTPKVCKALIKKAKALNIPVLVDPKGSDFSKYSGATLLTPNKKEALEALKFENLEGENLEKGIKKLKEDFALRYSIITLSEAGIALFDKSLKIAPAKALEVYDVTGAGDSVIAVLAFCLANGVEIFKACELANEAAAVVVGKIGSVSVSFDEIKSFNRVDFEKKIKSKEELLTLLKQKDKKIVFTNGCFDIVHFGHIKYLEKAKRLGDVLIVGLNSDASVKKLKGESRPVNSEFQRACMLAAFYFVDFVVIFDEDTPLELISFLKPDILVKGADYKDKIVVGADIVSKVELIDFEEGFSTSKIIEKIKDKK</sequence>
<accession>A7H2L7</accession>
<reference key="1">
    <citation type="submission" date="2007-07" db="EMBL/GenBank/DDBJ databases">
        <title>Complete genome sequence of Campylobacter jejuni subsp doylei 269.97 isolated from human blood.</title>
        <authorList>
            <person name="Fouts D.E."/>
            <person name="Mongodin E.F."/>
            <person name="Puiu D."/>
            <person name="Sebastian Y."/>
            <person name="Miller W.G."/>
            <person name="Mandrell R.E."/>
            <person name="Lastovica A.J."/>
            <person name="Nelson K.E."/>
        </authorList>
    </citation>
    <scope>NUCLEOTIDE SEQUENCE [LARGE SCALE GENOMIC DNA]</scope>
    <source>
        <strain>ATCC BAA-1458 / RM4099 / 269.97</strain>
    </source>
</reference>
<keyword id="KW-0067">ATP-binding</keyword>
<keyword id="KW-0119">Carbohydrate metabolism</keyword>
<keyword id="KW-0418">Kinase</keyword>
<keyword id="KW-0511">Multifunctional enzyme</keyword>
<keyword id="KW-0547">Nucleotide-binding</keyword>
<keyword id="KW-0548">Nucleotidyltransferase</keyword>
<keyword id="KW-0808">Transferase</keyword>
<name>HLDE_CAMJD</name>
<organism>
    <name type="scientific">Campylobacter jejuni subsp. doylei (strain ATCC BAA-1458 / RM4099 / 269.97)</name>
    <dbReference type="NCBI Taxonomy" id="360109"/>
    <lineage>
        <taxon>Bacteria</taxon>
        <taxon>Pseudomonadati</taxon>
        <taxon>Campylobacterota</taxon>
        <taxon>Epsilonproteobacteria</taxon>
        <taxon>Campylobacterales</taxon>
        <taxon>Campylobacteraceae</taxon>
        <taxon>Campylobacter</taxon>
    </lineage>
</organism>
<feature type="chain" id="PRO_0000323482" description="Bifunctional protein HldE">
    <location>
        <begin position="1"/>
        <end position="461"/>
    </location>
</feature>
<feature type="region of interest" description="Ribokinase">
    <location>
        <begin position="1"/>
        <end position="312"/>
    </location>
</feature>
<feature type="region of interest" description="Cytidylyltransferase">
    <location>
        <begin position="334"/>
        <end position="461"/>
    </location>
</feature>
<feature type="active site" evidence="1">
    <location>
        <position position="259"/>
    </location>
</feature>
<feature type="binding site" evidence="1">
    <location>
        <begin position="191"/>
        <end position="194"/>
    </location>
    <ligand>
        <name>ATP</name>
        <dbReference type="ChEBI" id="CHEBI:30616"/>
    </ligand>
</feature>